<name>FOLD_BURP0</name>
<dbReference type="EC" id="1.5.1.5" evidence="1"/>
<dbReference type="EC" id="3.5.4.9" evidence="1"/>
<dbReference type="EMBL" id="CP000572">
    <property type="protein sequence ID" value="ABN91700.1"/>
    <property type="molecule type" value="Genomic_DNA"/>
</dbReference>
<dbReference type="RefSeq" id="WP_004536093.1">
    <property type="nucleotide sequence ID" value="NC_009076.1"/>
</dbReference>
<dbReference type="SMR" id="A3NX53"/>
<dbReference type="KEGG" id="bpl:BURPS1106A_2672"/>
<dbReference type="HOGENOM" id="CLU_034045_2_1_4"/>
<dbReference type="UniPathway" id="UPA00193"/>
<dbReference type="Proteomes" id="UP000006738">
    <property type="component" value="Chromosome I"/>
</dbReference>
<dbReference type="GO" id="GO:0005829">
    <property type="term" value="C:cytosol"/>
    <property type="evidence" value="ECO:0007669"/>
    <property type="project" value="TreeGrafter"/>
</dbReference>
<dbReference type="GO" id="GO:0004477">
    <property type="term" value="F:methenyltetrahydrofolate cyclohydrolase activity"/>
    <property type="evidence" value="ECO:0007669"/>
    <property type="project" value="UniProtKB-UniRule"/>
</dbReference>
<dbReference type="GO" id="GO:0004488">
    <property type="term" value="F:methylenetetrahydrofolate dehydrogenase (NADP+) activity"/>
    <property type="evidence" value="ECO:0007669"/>
    <property type="project" value="UniProtKB-UniRule"/>
</dbReference>
<dbReference type="GO" id="GO:0000105">
    <property type="term" value="P:L-histidine biosynthetic process"/>
    <property type="evidence" value="ECO:0007669"/>
    <property type="project" value="UniProtKB-KW"/>
</dbReference>
<dbReference type="GO" id="GO:0009086">
    <property type="term" value="P:methionine biosynthetic process"/>
    <property type="evidence" value="ECO:0007669"/>
    <property type="project" value="UniProtKB-KW"/>
</dbReference>
<dbReference type="GO" id="GO:0006164">
    <property type="term" value="P:purine nucleotide biosynthetic process"/>
    <property type="evidence" value="ECO:0007669"/>
    <property type="project" value="UniProtKB-KW"/>
</dbReference>
<dbReference type="GO" id="GO:0035999">
    <property type="term" value="P:tetrahydrofolate interconversion"/>
    <property type="evidence" value="ECO:0007669"/>
    <property type="project" value="UniProtKB-UniRule"/>
</dbReference>
<dbReference type="CDD" id="cd01080">
    <property type="entry name" value="NAD_bind_m-THF_DH_Cyclohyd"/>
    <property type="match status" value="1"/>
</dbReference>
<dbReference type="FunFam" id="3.40.50.720:FF:000094">
    <property type="entry name" value="Bifunctional protein FolD"/>
    <property type="match status" value="1"/>
</dbReference>
<dbReference type="FunFam" id="3.40.50.10860:FF:000005">
    <property type="entry name" value="C-1-tetrahydrofolate synthase, cytoplasmic, putative"/>
    <property type="match status" value="1"/>
</dbReference>
<dbReference type="Gene3D" id="3.40.50.10860">
    <property type="entry name" value="Leucine Dehydrogenase, chain A, domain 1"/>
    <property type="match status" value="1"/>
</dbReference>
<dbReference type="Gene3D" id="3.40.50.720">
    <property type="entry name" value="NAD(P)-binding Rossmann-like Domain"/>
    <property type="match status" value="1"/>
</dbReference>
<dbReference type="HAMAP" id="MF_01576">
    <property type="entry name" value="THF_DHG_CYH"/>
    <property type="match status" value="1"/>
</dbReference>
<dbReference type="InterPro" id="IPR046346">
    <property type="entry name" value="Aminoacid_DH-like_N_sf"/>
</dbReference>
<dbReference type="InterPro" id="IPR036291">
    <property type="entry name" value="NAD(P)-bd_dom_sf"/>
</dbReference>
<dbReference type="InterPro" id="IPR000672">
    <property type="entry name" value="THF_DH/CycHdrlase"/>
</dbReference>
<dbReference type="InterPro" id="IPR020630">
    <property type="entry name" value="THF_DH/CycHdrlase_cat_dom"/>
</dbReference>
<dbReference type="InterPro" id="IPR020867">
    <property type="entry name" value="THF_DH/CycHdrlase_CS"/>
</dbReference>
<dbReference type="InterPro" id="IPR020631">
    <property type="entry name" value="THF_DH/CycHdrlase_NAD-bd_dom"/>
</dbReference>
<dbReference type="NCBIfam" id="NF008058">
    <property type="entry name" value="PRK10792.1"/>
    <property type="match status" value="1"/>
</dbReference>
<dbReference type="NCBIfam" id="NF010783">
    <property type="entry name" value="PRK14186.1"/>
    <property type="match status" value="1"/>
</dbReference>
<dbReference type="NCBIfam" id="NF010786">
    <property type="entry name" value="PRK14189.1"/>
    <property type="match status" value="1"/>
</dbReference>
<dbReference type="PANTHER" id="PTHR48099:SF5">
    <property type="entry name" value="C-1-TETRAHYDROFOLATE SYNTHASE, CYTOPLASMIC"/>
    <property type="match status" value="1"/>
</dbReference>
<dbReference type="PANTHER" id="PTHR48099">
    <property type="entry name" value="C-1-TETRAHYDROFOLATE SYNTHASE, CYTOPLASMIC-RELATED"/>
    <property type="match status" value="1"/>
</dbReference>
<dbReference type="Pfam" id="PF00763">
    <property type="entry name" value="THF_DHG_CYH"/>
    <property type="match status" value="1"/>
</dbReference>
<dbReference type="Pfam" id="PF02882">
    <property type="entry name" value="THF_DHG_CYH_C"/>
    <property type="match status" value="1"/>
</dbReference>
<dbReference type="PRINTS" id="PR00085">
    <property type="entry name" value="THFDHDRGNASE"/>
</dbReference>
<dbReference type="SUPFAM" id="SSF53223">
    <property type="entry name" value="Aminoacid dehydrogenase-like, N-terminal domain"/>
    <property type="match status" value="1"/>
</dbReference>
<dbReference type="SUPFAM" id="SSF51735">
    <property type="entry name" value="NAD(P)-binding Rossmann-fold domains"/>
    <property type="match status" value="1"/>
</dbReference>
<dbReference type="PROSITE" id="PS00766">
    <property type="entry name" value="THF_DHG_CYH_1"/>
    <property type="match status" value="1"/>
</dbReference>
<dbReference type="PROSITE" id="PS00767">
    <property type="entry name" value="THF_DHG_CYH_2"/>
    <property type="match status" value="1"/>
</dbReference>
<reference key="1">
    <citation type="journal article" date="2010" name="Genome Biol. Evol.">
        <title>Continuing evolution of Burkholderia mallei through genome reduction and large-scale rearrangements.</title>
        <authorList>
            <person name="Losada L."/>
            <person name="Ronning C.M."/>
            <person name="DeShazer D."/>
            <person name="Woods D."/>
            <person name="Fedorova N."/>
            <person name="Kim H.S."/>
            <person name="Shabalina S.A."/>
            <person name="Pearson T.R."/>
            <person name="Brinkac L."/>
            <person name="Tan P."/>
            <person name="Nandi T."/>
            <person name="Crabtree J."/>
            <person name="Badger J."/>
            <person name="Beckstrom-Sternberg S."/>
            <person name="Saqib M."/>
            <person name="Schutzer S.E."/>
            <person name="Keim P."/>
            <person name="Nierman W.C."/>
        </authorList>
    </citation>
    <scope>NUCLEOTIDE SEQUENCE [LARGE SCALE GENOMIC DNA]</scope>
    <source>
        <strain>1106a</strain>
    </source>
</reference>
<proteinExistence type="inferred from homology"/>
<protein>
    <recommendedName>
        <fullName evidence="1">Bifunctional protein FolD</fullName>
    </recommendedName>
    <domain>
        <recommendedName>
            <fullName evidence="1">Methylenetetrahydrofolate dehydrogenase</fullName>
            <ecNumber evidence="1">1.5.1.5</ecNumber>
        </recommendedName>
    </domain>
    <domain>
        <recommendedName>
            <fullName evidence="1">Methenyltetrahydrofolate cyclohydrolase</fullName>
            <ecNumber evidence="1">3.5.4.9</ecNumber>
        </recommendedName>
    </domain>
</protein>
<organism>
    <name type="scientific">Burkholderia pseudomallei (strain 1106a)</name>
    <dbReference type="NCBI Taxonomy" id="357348"/>
    <lineage>
        <taxon>Bacteria</taxon>
        <taxon>Pseudomonadati</taxon>
        <taxon>Pseudomonadota</taxon>
        <taxon>Betaproteobacteria</taxon>
        <taxon>Burkholderiales</taxon>
        <taxon>Burkholderiaceae</taxon>
        <taxon>Burkholderia</taxon>
        <taxon>pseudomallei group</taxon>
    </lineage>
</organism>
<keyword id="KW-0028">Amino-acid biosynthesis</keyword>
<keyword id="KW-0368">Histidine biosynthesis</keyword>
<keyword id="KW-0378">Hydrolase</keyword>
<keyword id="KW-0486">Methionine biosynthesis</keyword>
<keyword id="KW-0511">Multifunctional enzyme</keyword>
<keyword id="KW-0521">NADP</keyword>
<keyword id="KW-0554">One-carbon metabolism</keyword>
<keyword id="KW-0560">Oxidoreductase</keyword>
<keyword id="KW-0658">Purine biosynthesis</keyword>
<sequence>MTATLIDGNALSKTLRAQAAERAAALAARGHQPGLAVILVGDNPASEVYVRNKIKACEDNGFFSLKDRYPATLSEPELLARIDELNRDPKIHGILVQLPLPAHIDSHKVIEAIAPEKDVDGFHVANAGALLTGKPLFRPCTPYGVMKMFEAYKIPLQGANAVVIGRSNIVGKPMALLLLEAGATVTICHSKTRELAAHTRAADIVVAAVGKRNVLTADMVKPGATVIDVGMNRNDEGKLCGDVDFAGVSQVAGHITPVPGGVGPMTITMLLVNTIEAAERAAAAA</sequence>
<accession>A3NX53</accession>
<feature type="chain" id="PRO_0000305804" description="Bifunctional protein FolD">
    <location>
        <begin position="1"/>
        <end position="285"/>
    </location>
</feature>
<feature type="binding site" evidence="1">
    <location>
        <begin position="165"/>
        <end position="167"/>
    </location>
    <ligand>
        <name>NADP(+)</name>
        <dbReference type="ChEBI" id="CHEBI:58349"/>
    </ligand>
</feature>
<feature type="binding site" evidence="1">
    <location>
        <position position="190"/>
    </location>
    <ligand>
        <name>NADP(+)</name>
        <dbReference type="ChEBI" id="CHEBI:58349"/>
    </ligand>
</feature>
<gene>
    <name evidence="1" type="primary">folD</name>
    <name type="ordered locus">BURPS1106A_2672</name>
</gene>
<evidence type="ECO:0000255" key="1">
    <source>
        <dbReference type="HAMAP-Rule" id="MF_01576"/>
    </source>
</evidence>
<comment type="function">
    <text evidence="1">Catalyzes the oxidation of 5,10-methylenetetrahydrofolate to 5,10-methenyltetrahydrofolate and then the hydrolysis of 5,10-methenyltetrahydrofolate to 10-formyltetrahydrofolate.</text>
</comment>
<comment type="catalytic activity">
    <reaction evidence="1">
        <text>(6R)-5,10-methylene-5,6,7,8-tetrahydrofolate + NADP(+) = (6R)-5,10-methenyltetrahydrofolate + NADPH</text>
        <dbReference type="Rhea" id="RHEA:22812"/>
        <dbReference type="ChEBI" id="CHEBI:15636"/>
        <dbReference type="ChEBI" id="CHEBI:57455"/>
        <dbReference type="ChEBI" id="CHEBI:57783"/>
        <dbReference type="ChEBI" id="CHEBI:58349"/>
        <dbReference type="EC" id="1.5.1.5"/>
    </reaction>
</comment>
<comment type="catalytic activity">
    <reaction evidence="1">
        <text>(6R)-5,10-methenyltetrahydrofolate + H2O = (6R)-10-formyltetrahydrofolate + H(+)</text>
        <dbReference type="Rhea" id="RHEA:23700"/>
        <dbReference type="ChEBI" id="CHEBI:15377"/>
        <dbReference type="ChEBI" id="CHEBI:15378"/>
        <dbReference type="ChEBI" id="CHEBI:57455"/>
        <dbReference type="ChEBI" id="CHEBI:195366"/>
        <dbReference type="EC" id="3.5.4.9"/>
    </reaction>
</comment>
<comment type="pathway">
    <text evidence="1">One-carbon metabolism; tetrahydrofolate interconversion.</text>
</comment>
<comment type="subunit">
    <text evidence="1">Homodimer.</text>
</comment>
<comment type="similarity">
    <text evidence="1">Belongs to the tetrahydrofolate dehydrogenase/cyclohydrolase family.</text>
</comment>